<organism>
    <name type="scientific">Yersinia pseudotuberculosis serotype IB (strain PB1/+)</name>
    <dbReference type="NCBI Taxonomy" id="502801"/>
    <lineage>
        <taxon>Bacteria</taxon>
        <taxon>Pseudomonadati</taxon>
        <taxon>Pseudomonadota</taxon>
        <taxon>Gammaproteobacteria</taxon>
        <taxon>Enterobacterales</taxon>
        <taxon>Yersiniaceae</taxon>
        <taxon>Yersinia</taxon>
    </lineage>
</organism>
<sequence length="103" mass="11644">MYAVFQSGGKQHRVSEGQTIRLEKLDIATGETIEFDQVLMIANGEEINIGAPLVDGGKIKAEIIAHGRGEKIKIVKFRRRKHYRKQQGHRQWFTDVKITGISA</sequence>
<evidence type="ECO:0000255" key="1">
    <source>
        <dbReference type="HAMAP-Rule" id="MF_01363"/>
    </source>
</evidence>
<evidence type="ECO:0000305" key="2"/>
<feature type="chain" id="PRO_1000143873" description="Large ribosomal subunit protein bL21">
    <location>
        <begin position="1"/>
        <end position="103"/>
    </location>
</feature>
<comment type="function">
    <text evidence="1">This protein binds to 23S rRNA in the presence of protein L20.</text>
</comment>
<comment type="subunit">
    <text evidence="1">Part of the 50S ribosomal subunit. Contacts protein L20.</text>
</comment>
<comment type="similarity">
    <text evidence="1">Belongs to the bacterial ribosomal protein bL21 family.</text>
</comment>
<reference key="1">
    <citation type="submission" date="2008-04" db="EMBL/GenBank/DDBJ databases">
        <title>Complete sequence of Yersinia pseudotuberculosis PB1/+.</title>
        <authorList>
            <person name="Copeland A."/>
            <person name="Lucas S."/>
            <person name="Lapidus A."/>
            <person name="Glavina del Rio T."/>
            <person name="Dalin E."/>
            <person name="Tice H."/>
            <person name="Bruce D."/>
            <person name="Goodwin L."/>
            <person name="Pitluck S."/>
            <person name="Munk A.C."/>
            <person name="Brettin T."/>
            <person name="Detter J.C."/>
            <person name="Han C."/>
            <person name="Tapia R."/>
            <person name="Schmutz J."/>
            <person name="Larimer F."/>
            <person name="Land M."/>
            <person name="Hauser L."/>
            <person name="Challacombe J.F."/>
            <person name="Green L."/>
            <person name="Lindler L.E."/>
            <person name="Nikolich M.P."/>
            <person name="Richardson P."/>
        </authorList>
    </citation>
    <scope>NUCLEOTIDE SEQUENCE [LARGE SCALE GENOMIC DNA]</scope>
    <source>
        <strain>PB1/+</strain>
    </source>
</reference>
<keyword id="KW-0687">Ribonucleoprotein</keyword>
<keyword id="KW-0689">Ribosomal protein</keyword>
<keyword id="KW-0694">RNA-binding</keyword>
<keyword id="KW-0699">rRNA-binding</keyword>
<dbReference type="EMBL" id="CP001048">
    <property type="protein sequence ID" value="ACC87480.1"/>
    <property type="molecule type" value="Genomic_DNA"/>
</dbReference>
<dbReference type="RefSeq" id="WP_002210178.1">
    <property type="nucleotide sequence ID" value="NZ_CP009780.1"/>
</dbReference>
<dbReference type="SMR" id="B2K2N9"/>
<dbReference type="GeneID" id="57975202"/>
<dbReference type="KEGG" id="ypb:YPTS_0494"/>
<dbReference type="PATRIC" id="fig|502801.10.peg.4168"/>
<dbReference type="GO" id="GO:0005737">
    <property type="term" value="C:cytoplasm"/>
    <property type="evidence" value="ECO:0007669"/>
    <property type="project" value="UniProtKB-ARBA"/>
</dbReference>
<dbReference type="GO" id="GO:1990904">
    <property type="term" value="C:ribonucleoprotein complex"/>
    <property type="evidence" value="ECO:0007669"/>
    <property type="project" value="UniProtKB-KW"/>
</dbReference>
<dbReference type="GO" id="GO:0005840">
    <property type="term" value="C:ribosome"/>
    <property type="evidence" value="ECO:0007669"/>
    <property type="project" value="UniProtKB-KW"/>
</dbReference>
<dbReference type="GO" id="GO:0019843">
    <property type="term" value="F:rRNA binding"/>
    <property type="evidence" value="ECO:0007669"/>
    <property type="project" value="UniProtKB-UniRule"/>
</dbReference>
<dbReference type="GO" id="GO:0003735">
    <property type="term" value="F:structural constituent of ribosome"/>
    <property type="evidence" value="ECO:0007669"/>
    <property type="project" value="InterPro"/>
</dbReference>
<dbReference type="GO" id="GO:0006412">
    <property type="term" value="P:translation"/>
    <property type="evidence" value="ECO:0007669"/>
    <property type="project" value="UniProtKB-UniRule"/>
</dbReference>
<dbReference type="HAMAP" id="MF_01363">
    <property type="entry name" value="Ribosomal_bL21"/>
    <property type="match status" value="1"/>
</dbReference>
<dbReference type="InterPro" id="IPR028909">
    <property type="entry name" value="bL21-like"/>
</dbReference>
<dbReference type="InterPro" id="IPR036164">
    <property type="entry name" value="bL21-like_sf"/>
</dbReference>
<dbReference type="InterPro" id="IPR001787">
    <property type="entry name" value="Ribosomal_bL21"/>
</dbReference>
<dbReference type="InterPro" id="IPR018258">
    <property type="entry name" value="Ribosomal_bL21_CS"/>
</dbReference>
<dbReference type="NCBIfam" id="TIGR00061">
    <property type="entry name" value="L21"/>
    <property type="match status" value="1"/>
</dbReference>
<dbReference type="PANTHER" id="PTHR21349">
    <property type="entry name" value="50S RIBOSOMAL PROTEIN L21"/>
    <property type="match status" value="1"/>
</dbReference>
<dbReference type="PANTHER" id="PTHR21349:SF0">
    <property type="entry name" value="LARGE RIBOSOMAL SUBUNIT PROTEIN BL21M"/>
    <property type="match status" value="1"/>
</dbReference>
<dbReference type="Pfam" id="PF00829">
    <property type="entry name" value="Ribosomal_L21p"/>
    <property type="match status" value="1"/>
</dbReference>
<dbReference type="SUPFAM" id="SSF141091">
    <property type="entry name" value="L21p-like"/>
    <property type="match status" value="1"/>
</dbReference>
<dbReference type="PROSITE" id="PS01169">
    <property type="entry name" value="RIBOSOMAL_L21"/>
    <property type="match status" value="1"/>
</dbReference>
<accession>B2K2N9</accession>
<proteinExistence type="inferred from homology"/>
<protein>
    <recommendedName>
        <fullName evidence="1">Large ribosomal subunit protein bL21</fullName>
    </recommendedName>
    <alternativeName>
        <fullName evidence="2">50S ribosomal protein L21</fullName>
    </alternativeName>
</protein>
<name>RL21_YERPB</name>
<gene>
    <name evidence="1" type="primary">rplU</name>
    <name type="ordered locus">YPTS_0494</name>
</gene>